<gene>
    <name type="primary">BAZ1B</name>
    <name type="synonym">WBSC10</name>
    <name type="synonym">WBSCR10</name>
    <name type="synonym">WBSCR9</name>
    <name type="synonym">WSTF</name>
</gene>
<name>BAZ1B_HUMAN</name>
<evidence type="ECO:0000250" key="1">
    <source>
        <dbReference type="UniProtKB" id="Q9Z277"/>
    </source>
</evidence>
<evidence type="ECO:0000255" key="2"/>
<evidence type="ECO:0000255" key="3">
    <source>
        <dbReference type="PROSITE-ProRule" id="PRU00035"/>
    </source>
</evidence>
<evidence type="ECO:0000255" key="4">
    <source>
        <dbReference type="PROSITE-ProRule" id="PRU00063"/>
    </source>
</evidence>
<evidence type="ECO:0000255" key="5">
    <source>
        <dbReference type="PROSITE-ProRule" id="PRU00146"/>
    </source>
</evidence>
<evidence type="ECO:0000255" key="6">
    <source>
        <dbReference type="PROSITE-ProRule" id="PRU00475"/>
    </source>
</evidence>
<evidence type="ECO:0000256" key="7">
    <source>
        <dbReference type="SAM" id="MobiDB-lite"/>
    </source>
</evidence>
<evidence type="ECO:0000269" key="8">
    <source>
    </source>
</evidence>
<evidence type="ECO:0000269" key="9">
    <source>
    </source>
</evidence>
<evidence type="ECO:0000269" key="10">
    <source>
    </source>
</evidence>
<evidence type="ECO:0000269" key="11">
    <source>
    </source>
</evidence>
<evidence type="ECO:0000269" key="12">
    <source>
    </source>
</evidence>
<evidence type="ECO:0000269" key="13">
    <source>
    </source>
</evidence>
<evidence type="ECO:0000269" key="14">
    <source>
    </source>
</evidence>
<evidence type="ECO:0000269" key="15">
    <source>
    </source>
</evidence>
<evidence type="ECO:0000303" key="16">
    <source>
    </source>
</evidence>
<evidence type="ECO:0000305" key="17"/>
<evidence type="ECO:0000305" key="18">
    <source>
    </source>
</evidence>
<evidence type="ECO:0000305" key="19">
    <source>
    </source>
</evidence>
<evidence type="ECO:0007744" key="20">
    <source>
    </source>
</evidence>
<evidence type="ECO:0007744" key="21">
    <source>
    </source>
</evidence>
<evidence type="ECO:0007744" key="22">
    <source>
    </source>
</evidence>
<evidence type="ECO:0007744" key="23">
    <source>
    </source>
</evidence>
<evidence type="ECO:0007744" key="24">
    <source>
    </source>
</evidence>
<evidence type="ECO:0007744" key="25">
    <source>
    </source>
</evidence>
<evidence type="ECO:0007744" key="26">
    <source>
    </source>
</evidence>
<evidence type="ECO:0007744" key="27">
    <source>
    </source>
</evidence>
<evidence type="ECO:0007744" key="28">
    <source>
    </source>
</evidence>
<evidence type="ECO:0007744" key="29">
    <source>
    </source>
</evidence>
<evidence type="ECO:0007744" key="30">
    <source>
    </source>
</evidence>
<evidence type="ECO:0007744" key="31">
    <source>
    </source>
</evidence>
<evidence type="ECO:0007829" key="32">
    <source>
        <dbReference type="PDB" id="1F62"/>
    </source>
</evidence>
<organism>
    <name type="scientific">Homo sapiens</name>
    <name type="common">Human</name>
    <dbReference type="NCBI Taxonomy" id="9606"/>
    <lineage>
        <taxon>Eukaryota</taxon>
        <taxon>Metazoa</taxon>
        <taxon>Chordata</taxon>
        <taxon>Craniata</taxon>
        <taxon>Vertebrata</taxon>
        <taxon>Euteleostomi</taxon>
        <taxon>Mammalia</taxon>
        <taxon>Eutheria</taxon>
        <taxon>Euarchontoglires</taxon>
        <taxon>Primates</taxon>
        <taxon>Haplorrhini</taxon>
        <taxon>Catarrhini</taxon>
        <taxon>Hominidae</taxon>
        <taxon>Homo</taxon>
    </lineage>
</organism>
<reference key="1">
    <citation type="journal article" date="1998" name="Cytogenet. Cell Genet.">
        <title>Identification of the WBSCR9 gene, encoding a novel transcriptional regulator, in the Williams-Beuren syndrome deletion at 7q11.23.</title>
        <authorList>
            <person name="Peoples R.J."/>
            <person name="Cisco M.J."/>
            <person name="Kaplan P."/>
            <person name="Francke U."/>
        </authorList>
    </citation>
    <scope>NUCLEOTIDE SEQUENCE [MRNA] (ISOFORM 1)</scope>
</reference>
<reference key="2">
    <citation type="journal article" date="1998" name="Genomics">
        <title>A novel human gene, WSTF, is deleted in Williams Syndrome.</title>
        <authorList>
            <person name="Lu X."/>
            <person name="Meng X."/>
            <person name="Morris C.A."/>
            <person name="Keating M.T."/>
        </authorList>
    </citation>
    <scope>NUCLEOTIDE SEQUENCE [MRNA] (ISOFORM 1)</scope>
    <scope>INVOLVEMENT IN WBS</scope>
</reference>
<reference key="3">
    <citation type="journal article" date="2000" name="Genomics">
        <title>A novel family of bromodomain genes.</title>
        <authorList>
            <person name="Jones M.H."/>
            <person name="Hamana N."/>
            <person name="Nezu J."/>
            <person name="Shimane M."/>
        </authorList>
    </citation>
    <scope>NUCLEOTIDE SEQUENCE [MRNA] (ISOFORMS 1 AND 2)</scope>
    <source>
        <tissue>Testis</tissue>
    </source>
</reference>
<reference key="4">
    <citation type="journal article" date="2003" name="Nature">
        <title>The DNA sequence of human chromosome 7.</title>
        <authorList>
            <person name="Hillier L.W."/>
            <person name="Fulton R.S."/>
            <person name="Fulton L.A."/>
            <person name="Graves T.A."/>
            <person name="Pepin K.H."/>
            <person name="Wagner-McPherson C."/>
            <person name="Layman D."/>
            <person name="Maas J."/>
            <person name="Jaeger S."/>
            <person name="Walker R."/>
            <person name="Wylie K."/>
            <person name="Sekhon M."/>
            <person name="Becker M.C."/>
            <person name="O'Laughlin M.D."/>
            <person name="Schaller M.E."/>
            <person name="Fewell G.A."/>
            <person name="Delehaunty K.D."/>
            <person name="Miner T.L."/>
            <person name="Nash W.E."/>
            <person name="Cordes M."/>
            <person name="Du H."/>
            <person name="Sun H."/>
            <person name="Edwards J."/>
            <person name="Bradshaw-Cordum H."/>
            <person name="Ali J."/>
            <person name="Andrews S."/>
            <person name="Isak A."/>
            <person name="Vanbrunt A."/>
            <person name="Nguyen C."/>
            <person name="Du F."/>
            <person name="Lamar B."/>
            <person name="Courtney L."/>
            <person name="Kalicki J."/>
            <person name="Ozersky P."/>
            <person name="Bielicki L."/>
            <person name="Scott K."/>
            <person name="Holmes A."/>
            <person name="Harkins R."/>
            <person name="Harris A."/>
            <person name="Strong C.M."/>
            <person name="Hou S."/>
            <person name="Tomlinson C."/>
            <person name="Dauphin-Kohlberg S."/>
            <person name="Kozlowicz-Reilly A."/>
            <person name="Leonard S."/>
            <person name="Rohlfing T."/>
            <person name="Rock S.M."/>
            <person name="Tin-Wollam A.-M."/>
            <person name="Abbott A."/>
            <person name="Minx P."/>
            <person name="Maupin R."/>
            <person name="Strowmatt C."/>
            <person name="Latreille P."/>
            <person name="Miller N."/>
            <person name="Johnson D."/>
            <person name="Murray J."/>
            <person name="Woessner J.P."/>
            <person name="Wendl M.C."/>
            <person name="Yang S.-P."/>
            <person name="Schultz B.R."/>
            <person name="Wallis J.W."/>
            <person name="Spieth J."/>
            <person name="Bieri T.A."/>
            <person name="Nelson J.O."/>
            <person name="Berkowicz N."/>
            <person name="Wohldmann P.E."/>
            <person name="Cook L.L."/>
            <person name="Hickenbotham M.T."/>
            <person name="Eldred J."/>
            <person name="Williams D."/>
            <person name="Bedell J.A."/>
            <person name="Mardis E.R."/>
            <person name="Clifton S.W."/>
            <person name="Chissoe S.L."/>
            <person name="Marra M.A."/>
            <person name="Raymond C."/>
            <person name="Haugen E."/>
            <person name="Gillett W."/>
            <person name="Zhou Y."/>
            <person name="James R."/>
            <person name="Phelps K."/>
            <person name="Iadanoto S."/>
            <person name="Bubb K."/>
            <person name="Simms E."/>
            <person name="Levy R."/>
            <person name="Clendenning J."/>
            <person name="Kaul R."/>
            <person name="Kent W.J."/>
            <person name="Furey T.S."/>
            <person name="Baertsch R.A."/>
            <person name="Brent M.R."/>
            <person name="Keibler E."/>
            <person name="Flicek P."/>
            <person name="Bork P."/>
            <person name="Suyama M."/>
            <person name="Bailey J.A."/>
            <person name="Portnoy M.E."/>
            <person name="Torrents D."/>
            <person name="Chinwalla A.T."/>
            <person name="Gish W.R."/>
            <person name="Eddy S.R."/>
            <person name="McPherson J.D."/>
            <person name="Olson M.V."/>
            <person name="Eichler E.E."/>
            <person name="Green E.D."/>
            <person name="Waterston R.H."/>
            <person name="Wilson R.K."/>
        </authorList>
    </citation>
    <scope>NUCLEOTIDE SEQUENCE [LARGE SCALE GENOMIC DNA]</scope>
</reference>
<reference key="5">
    <citation type="submission" date="2005-09" db="EMBL/GenBank/DDBJ databases">
        <authorList>
            <person name="Mural R.J."/>
            <person name="Istrail S."/>
            <person name="Sutton G.G."/>
            <person name="Florea L."/>
            <person name="Halpern A.L."/>
            <person name="Mobarry C.M."/>
            <person name="Lippert R."/>
            <person name="Walenz B."/>
            <person name="Shatkay H."/>
            <person name="Dew I."/>
            <person name="Miller J.R."/>
            <person name="Flanigan M.J."/>
            <person name="Edwards N.J."/>
            <person name="Bolanos R."/>
            <person name="Fasulo D."/>
            <person name="Halldorsson B.V."/>
            <person name="Hannenhalli S."/>
            <person name="Turner R."/>
            <person name="Yooseph S."/>
            <person name="Lu F."/>
            <person name="Nusskern D.R."/>
            <person name="Shue B.C."/>
            <person name="Zheng X.H."/>
            <person name="Zhong F."/>
            <person name="Delcher A.L."/>
            <person name="Huson D.H."/>
            <person name="Kravitz S.A."/>
            <person name="Mouchard L."/>
            <person name="Reinert K."/>
            <person name="Remington K.A."/>
            <person name="Clark A.G."/>
            <person name="Waterman M.S."/>
            <person name="Eichler E.E."/>
            <person name="Adams M.D."/>
            <person name="Hunkapiller M.W."/>
            <person name="Myers E.W."/>
            <person name="Venter J.C."/>
        </authorList>
    </citation>
    <scope>NUCLEOTIDE SEQUENCE [LARGE SCALE GENOMIC DNA]</scope>
</reference>
<reference key="6">
    <citation type="journal article" date="2004" name="Genome Res.">
        <title>The status, quality, and expansion of the NIH full-length cDNA project: the Mammalian Gene Collection (MGC).</title>
        <authorList>
            <consortium name="The MGC Project Team"/>
        </authorList>
    </citation>
    <scope>NUCLEOTIDE SEQUENCE [LARGE SCALE MRNA]</scope>
    <source>
        <tissue>Testis</tissue>
    </source>
</reference>
<reference key="7">
    <citation type="journal article" date="2002" name="EMBO J.">
        <title>WSTF-ISWI chromatin remodeling complex targets heterochromatic replication foci.</title>
        <authorList>
            <person name="Bozhenok L."/>
            <person name="Wade P.A."/>
            <person name="Varga-Weisz P."/>
        </authorList>
    </citation>
    <scope>FUNCTION</scope>
    <scope>IDENTIFICATION IN THE WICH-5 ISWI CHROMATIN REMODELING COMPLEX</scope>
    <scope>INTERACTION WITH SMARCA5</scope>
    <scope>SUBCELLULAR LOCATION</scope>
</reference>
<reference key="8">
    <citation type="journal article" date="2004" name="Nat. Cell Biol.">
        <title>The Williams syndrome transcription factor interacts with PCNA to target chromatin remodelling by ISWI to replication foci.</title>
        <authorList>
            <person name="Poot R.A."/>
            <person name="Bozhenok L."/>
            <person name="van den Berg D.L.C."/>
            <person name="Steffensen S."/>
            <person name="Ferreira F."/>
            <person name="Grimaldi M."/>
            <person name="Gilbert N."/>
            <person name="Ferreira J."/>
            <person name="Varga-Weisz P.D."/>
        </authorList>
    </citation>
    <scope>FUNCTION</scope>
    <scope>INTERACTION WITH PCNA AND SMARCA5</scope>
    <scope>SUBCELLULAR LOCATION</scope>
</reference>
<reference key="9">
    <citation type="journal article" date="2005" name="EMBO J.">
        <title>Ligand-induced transrepression by VDR through association of WSTF with acetylated histones.</title>
        <authorList>
            <person name="Fujiki R."/>
            <person name="Kim M.-S."/>
            <person name="Sasaki Y."/>
            <person name="Yoshimura K."/>
            <person name="Kitagawa H."/>
            <person name="Kato S."/>
        </authorList>
    </citation>
    <scope>RETRACTED PAPER</scope>
</reference>
<reference key="10">
    <citation type="journal article" date="2014" name="EMBO J.">
        <title>Retraction: 'Ligand-induced transrepression by VDR through association of WSTF with acetylated histones'.</title>
        <authorList>
            <person name="Fujiki R."/>
            <person name="Kim M.-S."/>
            <person name="Sasaki Y."/>
            <person name="Yoshimura K."/>
            <person name="Kitagawa H."/>
            <person name="Kato S."/>
        </authorList>
    </citation>
    <scope>RETRACTION NOTICE OF PUBMED:16252006</scope>
</reference>
<reference key="11">
    <citation type="journal article" date="2006" name="Cell">
        <title>Global, in vivo, and site-specific phosphorylation dynamics in signaling networks.</title>
        <authorList>
            <person name="Olsen J.V."/>
            <person name="Blagoev B."/>
            <person name="Gnad F."/>
            <person name="Macek B."/>
            <person name="Kumar C."/>
            <person name="Mortensen P."/>
            <person name="Mann M."/>
        </authorList>
    </citation>
    <scope>PHOSPHORYLATION [LARGE SCALE ANALYSIS] AT SER-1342 AND SER-1468</scope>
    <scope>IDENTIFICATION BY MASS SPECTROMETRY [LARGE SCALE ANALYSIS]</scope>
    <source>
        <tissue>Cervix carcinoma</tissue>
    </source>
</reference>
<reference key="12">
    <citation type="journal article" date="2006" name="J. Biol. Chem.">
        <title>The WSTF-SNF2h chromatin remodeling complex interacts with several nuclear proteins in transcription.</title>
        <authorList>
            <person name="Cavellan E."/>
            <person name="Asp P."/>
            <person name="Percipalle P."/>
            <person name="Oestlund Farrants A.-K."/>
        </authorList>
    </citation>
    <scope>FUNCTION</scope>
    <scope>IDENTIFICATION IN THE B-WICH COMPLEX</scope>
    <scope>INTERACTION WITH SMARCA5; DDX21; DEK; MYBBP1A; SF3B1; ERCC6 AND MYO1C</scope>
</reference>
<reference key="13">
    <citation type="journal article" date="2008" name="Mol. Biol. Cell">
        <title>Identification of novel human Cdt1-binding proteins by a proteomics approach: proteolytic regulation by APC/CCdh1.</title>
        <authorList>
            <person name="Sugimoto N."/>
            <person name="Kitabayashi I."/>
            <person name="Osano S."/>
            <person name="Tatsumi Y."/>
            <person name="Yugawa T."/>
            <person name="Narisawa-Saito M."/>
            <person name="Matsukage A."/>
            <person name="Kiyono T."/>
            <person name="Fujita M."/>
        </authorList>
    </citation>
    <scope>IDENTIFICATION BY MASS SPECTROMETRY</scope>
    <scope>INTERACTION WITH CDT1</scope>
</reference>
<reference key="14">
    <citation type="journal article" date="2008" name="Mol. Cell">
        <title>Kinase-selective enrichment enables quantitative phosphoproteomics of the kinome across the cell cycle.</title>
        <authorList>
            <person name="Daub H."/>
            <person name="Olsen J.V."/>
            <person name="Bairlein M."/>
            <person name="Gnad F."/>
            <person name="Oppermann F.S."/>
            <person name="Korner R."/>
            <person name="Greff Z."/>
            <person name="Keri G."/>
            <person name="Stemmann O."/>
            <person name="Mann M."/>
        </authorList>
    </citation>
    <scope>PHOSPHORYLATION [LARGE SCALE ANALYSIS] AT SER-1468</scope>
    <scope>IDENTIFICATION BY MASS SPECTROMETRY [LARGE SCALE ANALYSIS]</scope>
    <source>
        <tissue>Cervix carcinoma</tissue>
    </source>
</reference>
<reference key="15">
    <citation type="journal article" date="2008" name="Proc. Natl. Acad. Sci. U.S.A.">
        <title>A quantitative atlas of mitotic phosphorylation.</title>
        <authorList>
            <person name="Dephoure N."/>
            <person name="Zhou C."/>
            <person name="Villen J."/>
            <person name="Beausoleil S.A."/>
            <person name="Bakalarski C.E."/>
            <person name="Elledge S.J."/>
            <person name="Gygi S.P."/>
        </authorList>
    </citation>
    <scope>PHOSPHORYLATION [LARGE SCALE ANALYSIS] AT SER-330; SER-374; SER-699; SER-705; SER-708; SER-716; SER-947; SER-1315 AND SER-1468</scope>
    <scope>ACETYLATION AT LYS-1335</scope>
    <scope>IDENTIFICATION BY MASS SPECTROMETRY [LARGE SCALE ANALYSIS]</scope>
    <source>
        <tissue>Cervix carcinoma</tissue>
    </source>
</reference>
<reference key="16">
    <citation type="journal article" date="2009" name="Anal. Chem.">
        <title>Lys-N and trypsin cover complementary parts of the phosphoproteome in a refined SCX-based approach.</title>
        <authorList>
            <person name="Gauci S."/>
            <person name="Helbig A.O."/>
            <person name="Slijper M."/>
            <person name="Krijgsveld J."/>
            <person name="Heck A.J."/>
            <person name="Mohammed S."/>
        </authorList>
    </citation>
    <scope>IDENTIFICATION BY MASS SPECTROMETRY [LARGE SCALE ANALYSIS]</scope>
</reference>
<reference key="17">
    <citation type="journal article" date="2009" name="Nature">
        <title>WSTF regulates the H2A.X DNA damage response via a novel tyrosine kinase activity.</title>
        <authorList>
            <person name="Xiao A."/>
            <person name="Li H."/>
            <person name="Shechter D."/>
            <person name="Ahn S.H."/>
            <person name="Fabrizio L.A."/>
            <person name="Erdjument-Bromage H."/>
            <person name="Ishibe-Murakami S."/>
            <person name="Wang B."/>
            <person name="Tempst P."/>
            <person name="Hofmann K."/>
            <person name="Patel D.J."/>
            <person name="Elledge S.J."/>
            <person name="Allis C.D."/>
        </authorList>
    </citation>
    <scope>FUNCTION</scope>
    <scope>CATALYTIC ACTIVITY</scope>
    <scope>COFACTOR</scope>
    <scope>MUTAGENESIS OF CYS-338</scope>
</reference>
<reference key="18">
    <citation type="journal article" date="2009" name="Nature">
        <title>Tyrosine dephosphorylation of H2AX modulates apoptosis and survival decisions.</title>
        <authorList>
            <person name="Cook P.J."/>
            <person name="Ju B.G."/>
            <person name="Telese F."/>
            <person name="Wang X."/>
            <person name="Glass C.K."/>
            <person name="Rosenfeld M.G."/>
        </authorList>
    </citation>
    <scope>FUNCTION</scope>
</reference>
<reference key="19">
    <citation type="journal article" date="2009" name="Sci. Signal.">
        <title>Quantitative phosphoproteomic analysis of T cell receptor signaling reveals system-wide modulation of protein-protein interactions.</title>
        <authorList>
            <person name="Mayya V."/>
            <person name="Lundgren D.H."/>
            <person name="Hwang S.-I."/>
            <person name="Rezaul K."/>
            <person name="Wu L."/>
            <person name="Eng J.K."/>
            <person name="Rodionov V."/>
            <person name="Han D.K."/>
        </authorList>
    </citation>
    <scope>PHOSPHORYLATION [LARGE SCALE ANALYSIS] AT SER-705</scope>
    <scope>IDENTIFICATION BY MASS SPECTROMETRY [LARGE SCALE ANALYSIS]</scope>
    <source>
        <tissue>Leukemic T-cell</tissue>
    </source>
</reference>
<reference key="20">
    <citation type="journal article" date="2010" name="Sci. Signal.">
        <title>Quantitative phosphoproteomics reveals widespread full phosphorylation site occupancy during mitosis.</title>
        <authorList>
            <person name="Olsen J.V."/>
            <person name="Vermeulen M."/>
            <person name="Santamaria A."/>
            <person name="Kumar C."/>
            <person name="Miller M.L."/>
            <person name="Jensen L.J."/>
            <person name="Gnad F."/>
            <person name="Cox J."/>
            <person name="Jensen T.S."/>
            <person name="Nigg E.A."/>
            <person name="Brunak S."/>
            <person name="Mann M."/>
        </authorList>
    </citation>
    <scope>PHOSPHORYLATION [LARGE SCALE ANALYSIS] AT THR-266; SER-345; SER-347; SER-349; SER-361; SER-1342 AND SER-1468</scope>
    <scope>IDENTIFICATION BY MASS SPECTROMETRY [LARGE SCALE ANALYSIS]</scope>
    <source>
        <tissue>Cervix carcinoma</tissue>
    </source>
</reference>
<reference key="21">
    <citation type="journal article" date="2011" name="Sci. Signal.">
        <title>System-wide temporal characterization of the proteome and phosphoproteome of human embryonic stem cell differentiation.</title>
        <authorList>
            <person name="Rigbolt K.T."/>
            <person name="Prokhorova T.A."/>
            <person name="Akimov V."/>
            <person name="Henningsen J."/>
            <person name="Johansen P.T."/>
            <person name="Kratchmarova I."/>
            <person name="Kassem M."/>
            <person name="Mann M."/>
            <person name="Olsen J.V."/>
            <person name="Blagoev B."/>
        </authorList>
    </citation>
    <scope>PHOSPHORYLATION [LARGE SCALE ANALYSIS] AT SER-347; SER-349; SER-705; SER-1342 AND SER-1468</scope>
    <scope>IDENTIFICATION BY MASS SPECTROMETRY [LARGE SCALE ANALYSIS]</scope>
</reference>
<reference key="22">
    <citation type="journal article" date="2013" name="J. Proteome Res.">
        <title>Toward a comprehensive characterization of a human cancer cell phosphoproteome.</title>
        <authorList>
            <person name="Zhou H."/>
            <person name="Di Palma S."/>
            <person name="Preisinger C."/>
            <person name="Peng M."/>
            <person name="Polat A.N."/>
            <person name="Heck A.J."/>
            <person name="Mohammed S."/>
        </authorList>
    </citation>
    <scope>PHOSPHORYLATION [LARGE SCALE ANALYSIS] AT SER-349; SER-361; SER-947 AND SER-1468</scope>
    <scope>ACETYLATION AT LYS-1335</scope>
    <scope>IDENTIFICATION BY MASS SPECTROMETRY [LARGE SCALE ANALYSIS]</scope>
    <source>
        <tissue>Cervix carcinoma</tissue>
        <tissue>Erythroleukemia</tissue>
    </source>
</reference>
<reference key="23">
    <citation type="journal article" date="2014" name="J. Proteomics">
        <title>An enzyme assisted RP-RPLC approach for in-depth analysis of human liver phosphoproteome.</title>
        <authorList>
            <person name="Bian Y."/>
            <person name="Song C."/>
            <person name="Cheng K."/>
            <person name="Dong M."/>
            <person name="Wang F."/>
            <person name="Huang J."/>
            <person name="Sun D."/>
            <person name="Wang L."/>
            <person name="Ye M."/>
            <person name="Zou H."/>
        </authorList>
    </citation>
    <scope>PHOSPHORYLATION [LARGE SCALE ANALYSIS] AT SER-716; SER-947 AND SER-1468</scope>
    <scope>ACETYLATION AT LYS-1335</scope>
    <scope>IDENTIFICATION BY MASS SPECTROMETRY [LARGE SCALE ANALYSIS]</scope>
    <source>
        <tissue>Liver</tissue>
    </source>
</reference>
<reference key="24">
    <citation type="journal article" date="2014" name="Nat. Struct. Mol. Biol.">
        <title>Uncovering global SUMOylation signaling networks in a site-specific manner.</title>
        <authorList>
            <person name="Hendriks I.A."/>
            <person name="D'Souza R.C."/>
            <person name="Yang B."/>
            <person name="Verlaan-de Vries M."/>
            <person name="Mann M."/>
            <person name="Vertegaal A.C."/>
        </authorList>
    </citation>
    <scope>SUMOYLATION [LARGE SCALE ANALYSIS] AT LYS-826 AND LYS-1089</scope>
    <scope>IDENTIFICATION BY MASS SPECTROMETRY [LARGE SCALE ANALYSIS]</scope>
</reference>
<reference key="25">
    <citation type="journal article" date="2014" name="Proc. Natl. Acad. Sci. U.S.A.">
        <title>Mapping of SUMO sites and analysis of SUMOylation changes induced by external stimuli.</title>
        <authorList>
            <person name="Impens F."/>
            <person name="Radoshevich L."/>
            <person name="Cossart P."/>
            <person name="Ribet D."/>
        </authorList>
    </citation>
    <scope>SUMOYLATION [LARGE SCALE ANALYSIS] AT LYS-826</scope>
    <scope>IDENTIFICATION BY MASS SPECTROMETRY [LARGE SCALE ANALYSIS]</scope>
</reference>
<reference key="26">
    <citation type="journal article" date="2015" name="Genes Dev.">
        <title>Screen identifies bromodomain protein ZMYND8 in chromatin recognition of transcription-associated DNA damage that promotes homologous recombination.</title>
        <authorList>
            <person name="Gong F."/>
            <person name="Chiu L.Y."/>
            <person name="Cox B."/>
            <person name="Aymard F."/>
            <person name="Clouaire T."/>
            <person name="Leung J.W."/>
            <person name="Cammarata M."/>
            <person name="Perez M."/>
            <person name="Agarwal P."/>
            <person name="Brodbelt J.S."/>
            <person name="Legube G."/>
            <person name="Miller K.M."/>
        </authorList>
    </citation>
    <scope>SUBCELLULAR LOCATION</scope>
</reference>
<reference key="27">
    <citation type="journal article" date="2015" name="Mol. Cell. Proteomics">
        <title>System-wide analysis of SUMOylation dynamics in response to replication stress reveals novel small ubiquitin-like modified target proteins and acceptor lysines relevant for genome stability.</title>
        <authorList>
            <person name="Xiao Z."/>
            <person name="Chang J.G."/>
            <person name="Hendriks I.A."/>
            <person name="Sigurdsson J.O."/>
            <person name="Olsen J.V."/>
            <person name="Vertegaal A.C."/>
        </authorList>
    </citation>
    <scope>SUMOYLATION [LARGE SCALE ANALYSIS] AT LYS-826 AND LYS-1089</scope>
    <scope>IDENTIFICATION BY MASS SPECTROMETRY [LARGE SCALE ANALYSIS]</scope>
</reference>
<reference key="28">
    <citation type="journal article" date="2017" name="EMBO Rep.">
        <title>Expansion of the ISWI chromatin remodeler family with new active complexes.</title>
        <authorList>
            <person name="Oppikofer M."/>
            <person name="Bai T."/>
            <person name="Gan Y."/>
            <person name="Haley B."/>
            <person name="Liu P."/>
            <person name="Sandoval W."/>
            <person name="Ciferri C."/>
            <person name="Cochran A.G."/>
        </authorList>
    </citation>
    <scope>FUNCTION</scope>
    <scope>IDENTIFICATION IN THE WICH-1 ISWI CHROMATIN REMODELING COMPLEX</scope>
    <scope>IDENTIFICATION IN THE WICH-5 CHROMATIN REMODELING COMPLEX</scope>
    <scope>INTERACTION WITH SMARCA1 AND SMARCA5</scope>
</reference>
<reference key="29">
    <citation type="journal article" date="2017" name="Nat. Struct. Mol. Biol.">
        <title>Site-specific mapping of the human SUMO proteome reveals co-modification with phosphorylation.</title>
        <authorList>
            <person name="Hendriks I.A."/>
            <person name="Lyon D."/>
            <person name="Young C."/>
            <person name="Jensen L.J."/>
            <person name="Vertegaal A.C."/>
            <person name="Nielsen M.L."/>
        </authorList>
    </citation>
    <scope>SUMOYLATION [LARGE SCALE ANALYSIS] AT LYS-826; LYS-853; LYS-1043; LYS-1089 AND LYS-1107</scope>
    <scope>IDENTIFICATION BY MASS SPECTROMETRY [LARGE SCALE ANALYSIS]</scope>
</reference>
<reference key="30">
    <citation type="journal article" date="2000" name="J. Mol. Biol.">
        <title>Structure of the PHD zinc finger from human Williams-Beuren syndrome transcription factor.</title>
        <authorList>
            <person name="Pascual J."/>
            <person name="Martinez-Yamout M."/>
            <person name="Dyson H.J."/>
            <person name="Wright P.E."/>
        </authorList>
    </citation>
    <scope>STRUCTURE BY NMR OF 1185-1235</scope>
</reference>
<feature type="chain" id="PRO_0000211170" description="Tyrosine-protein kinase BAZ1B">
    <location>
        <begin position="1"/>
        <end position="1483"/>
    </location>
</feature>
<feature type="domain" description="WAC" evidence="6">
    <location>
        <begin position="20"/>
        <end position="126"/>
    </location>
</feature>
<feature type="domain" description="DDT" evidence="4">
    <location>
        <begin position="604"/>
        <end position="668"/>
    </location>
</feature>
<feature type="domain" description="Bromo" evidence="3">
    <location>
        <begin position="1339"/>
        <end position="1443"/>
    </location>
</feature>
<feature type="zinc finger region" description="PHD-type" evidence="5">
    <location>
        <begin position="1184"/>
        <end position="1234"/>
    </location>
</feature>
<feature type="region of interest" description="Disordered" evidence="7">
    <location>
        <begin position="145"/>
        <end position="212"/>
    </location>
</feature>
<feature type="region of interest" description="Disordered" evidence="7">
    <location>
        <begin position="302"/>
        <end position="333"/>
    </location>
</feature>
<feature type="region of interest" description="Disordered" evidence="7">
    <location>
        <begin position="379"/>
        <end position="432"/>
    </location>
</feature>
<feature type="region of interest" description="Disordered" evidence="7">
    <location>
        <begin position="446"/>
        <end position="470"/>
    </location>
</feature>
<feature type="region of interest" description="Disordered" evidence="7">
    <location>
        <begin position="788"/>
        <end position="817"/>
    </location>
</feature>
<feature type="region of interest" description="Disordered" evidence="7">
    <location>
        <begin position="1237"/>
        <end position="1326"/>
    </location>
</feature>
<feature type="region of interest" description="Disordered" evidence="7">
    <location>
        <begin position="1455"/>
        <end position="1483"/>
    </location>
</feature>
<feature type="coiled-coil region" evidence="2">
    <location>
        <begin position="533"/>
        <end position="586"/>
    </location>
</feature>
<feature type="coiled-coil region" evidence="2">
    <location>
        <begin position="768"/>
        <end position="814"/>
    </location>
</feature>
<feature type="coiled-coil region" evidence="2">
    <location>
        <begin position="850"/>
        <end position="893"/>
    </location>
</feature>
<feature type="coiled-coil region" evidence="2">
    <location>
        <begin position="1245"/>
        <end position="1283"/>
    </location>
</feature>
<feature type="short sequence motif" description="C motif">
    <location>
        <begin position="207"/>
        <end position="213"/>
    </location>
</feature>
<feature type="compositionally biased region" description="Basic and acidic residues" evidence="7">
    <location>
        <begin position="148"/>
        <end position="165"/>
    </location>
</feature>
<feature type="compositionally biased region" description="Basic and acidic residues" evidence="7">
    <location>
        <begin position="172"/>
        <end position="195"/>
    </location>
</feature>
<feature type="compositionally biased region" description="Basic residues" evidence="7">
    <location>
        <begin position="384"/>
        <end position="395"/>
    </location>
</feature>
<feature type="compositionally biased region" description="Basic residues" evidence="7">
    <location>
        <begin position="423"/>
        <end position="432"/>
    </location>
</feature>
<feature type="compositionally biased region" description="Basic and acidic residues" evidence="7">
    <location>
        <begin position="788"/>
        <end position="810"/>
    </location>
</feature>
<feature type="compositionally biased region" description="Acidic residues" evidence="7">
    <location>
        <begin position="1249"/>
        <end position="1276"/>
    </location>
</feature>
<feature type="compositionally biased region" description="Basic residues" evidence="7">
    <location>
        <begin position="1282"/>
        <end position="1292"/>
    </location>
</feature>
<feature type="compositionally biased region" description="Basic residues" evidence="7">
    <location>
        <begin position="1301"/>
        <end position="1316"/>
    </location>
</feature>
<feature type="modified residue" description="Phosphoserine" evidence="1">
    <location>
        <position position="152"/>
    </location>
</feature>
<feature type="modified residue" description="Phosphoserine" evidence="1">
    <location>
        <position position="158"/>
    </location>
</feature>
<feature type="modified residue" description="Phosphoserine" evidence="1">
    <location>
        <position position="161"/>
    </location>
</feature>
<feature type="modified residue" description="Phosphothreonine" evidence="24">
    <location>
        <position position="266"/>
    </location>
</feature>
<feature type="modified residue" description="Phosphoserine" evidence="21">
    <location>
        <position position="330"/>
    </location>
</feature>
<feature type="modified residue" description="Phosphoserine" evidence="24">
    <location>
        <position position="345"/>
    </location>
</feature>
<feature type="modified residue" description="Phosphoserine" evidence="24 25">
    <location>
        <position position="347"/>
    </location>
</feature>
<feature type="modified residue" description="Phosphoserine" evidence="24 25 26">
    <location>
        <position position="349"/>
    </location>
</feature>
<feature type="modified residue" description="Phosphoserine" evidence="24 26">
    <location>
        <position position="361"/>
    </location>
</feature>
<feature type="modified residue" description="Phosphoserine" evidence="21">
    <location>
        <position position="374"/>
    </location>
</feature>
<feature type="modified residue" description="Phosphoserine" evidence="21">
    <location>
        <position position="699"/>
    </location>
</feature>
<feature type="modified residue" description="Phosphoserine" evidence="21 23 25">
    <location>
        <position position="705"/>
    </location>
</feature>
<feature type="modified residue" description="Phosphoserine" evidence="21">
    <location>
        <position position="708"/>
    </location>
</feature>
<feature type="modified residue" description="Phosphoserine" evidence="21 27">
    <location>
        <position position="716"/>
    </location>
</feature>
<feature type="modified residue" description="Phosphoserine" evidence="21 26 27">
    <location>
        <position position="947"/>
    </location>
</feature>
<feature type="modified residue" description="Phosphoserine" evidence="21">
    <location>
        <position position="1315"/>
    </location>
</feature>
<feature type="modified residue" description="N6-acetyllysine" evidence="1">
    <location>
        <position position="1335"/>
    </location>
</feature>
<feature type="modified residue" description="Phosphoserine" evidence="20 24 25">
    <location>
        <position position="1342"/>
    </location>
</feature>
<feature type="modified residue" description="Phosphoserine" evidence="20 21 22 24 25 26 27">
    <location>
        <position position="1468"/>
    </location>
</feature>
<feature type="cross-link" description="Glycyl lysine isopeptide (Lys-Gly) (interchain with G-Cter in SUMO1); alternate" evidence="28">
    <location>
        <position position="826"/>
    </location>
</feature>
<feature type="cross-link" description="Glycyl lysine isopeptide (Lys-Gly) (interchain with G-Cter in SUMO2); alternate" evidence="28 29 30 31">
    <location>
        <position position="826"/>
    </location>
</feature>
<feature type="cross-link" description="Glycyl lysine isopeptide (Lys-Gly) (interchain with G-Cter in SUMO2)" evidence="31">
    <location>
        <position position="853"/>
    </location>
</feature>
<feature type="cross-link" description="Glycyl lysine isopeptide (Lys-Gly) (interchain with G-Cter in SUMO2)" evidence="31">
    <location>
        <position position="1043"/>
    </location>
</feature>
<feature type="cross-link" description="Glycyl lysine isopeptide (Lys-Gly) (interchain with G-Cter in SUMO2)" evidence="29 30 31">
    <location>
        <position position="1089"/>
    </location>
</feature>
<feature type="cross-link" description="Glycyl lysine isopeptide (Lys-Gly) (interchain with G-Cter in SUMO2)" evidence="31">
    <location>
        <position position="1107"/>
    </location>
</feature>
<feature type="splice variant" id="VSP_000552" description="In isoform 2." evidence="16">
    <location>
        <begin position="660"/>
        <end position="663"/>
    </location>
</feature>
<feature type="mutagenesis site" description="Loss of tyrosine-protein kinase activity." evidence="12">
    <original>C</original>
    <variation>A</variation>
    <location>
        <position position="338"/>
    </location>
</feature>
<feature type="sequence conflict" description="In Ref. 3; BAA89210." evidence="17" ref="3">
    <original>K</original>
    <variation>N</variation>
    <location>
        <position position="14"/>
    </location>
</feature>
<feature type="sequence conflict" description="In Ref. 3; BAA89210." evidence="17" ref="3">
    <original>L</original>
    <variation>F</variation>
    <location>
        <position position="22"/>
    </location>
</feature>
<feature type="sequence conflict" description="In Ref. 1; AAD08675." evidence="17" ref="1">
    <original>K</original>
    <variation>E</variation>
    <location>
        <position position="136"/>
    </location>
</feature>
<feature type="sequence conflict" description="In Ref. 3; BAA89210." evidence="17" ref="3">
    <original>E</original>
    <variation>R</variation>
    <location>
        <position position="823"/>
    </location>
</feature>
<feature type="sequence conflict" description="In Ref. 3; BAA89210." evidence="17" ref="3">
    <original>R</original>
    <variation>P</variation>
    <location>
        <position position="1191"/>
    </location>
</feature>
<feature type="sequence conflict" description="In Ref. 2; AAC97879." evidence="17" ref="2">
    <original>K</original>
    <variation>M</variation>
    <location>
        <position position="1354"/>
    </location>
</feature>
<feature type="sequence conflict" description="In Ref. 3; BAA89210." evidence="17" ref="3">
    <original>A</original>
    <variation>V</variation>
    <location>
        <position position="1438"/>
    </location>
</feature>
<feature type="turn" evidence="32">
    <location>
        <begin position="1188"/>
        <end position="1190"/>
    </location>
</feature>
<feature type="turn" evidence="32">
    <location>
        <begin position="1203"/>
        <end position="1205"/>
    </location>
</feature>
<feature type="helix" evidence="32">
    <location>
        <begin position="1211"/>
        <end position="1214"/>
    </location>
</feature>
<feature type="turn" evidence="32">
    <location>
        <begin position="1229"/>
        <end position="1231"/>
    </location>
</feature>
<keyword id="KW-0002">3D-structure</keyword>
<keyword id="KW-0007">Acetylation</keyword>
<keyword id="KW-0025">Alternative splicing</keyword>
<keyword id="KW-0067">ATP-binding</keyword>
<keyword id="KW-0103">Bromodomain</keyword>
<keyword id="KW-0175">Coiled coil</keyword>
<keyword id="KW-0227">DNA damage</keyword>
<keyword id="KW-1017">Isopeptide bond</keyword>
<keyword id="KW-0418">Kinase</keyword>
<keyword id="KW-0479">Metal-binding</keyword>
<keyword id="KW-0547">Nucleotide-binding</keyword>
<keyword id="KW-0539">Nucleus</keyword>
<keyword id="KW-0597">Phosphoprotein</keyword>
<keyword id="KW-1267">Proteomics identification</keyword>
<keyword id="KW-1185">Reference proteome</keyword>
<keyword id="KW-0804">Transcription</keyword>
<keyword id="KW-0805">Transcription regulation</keyword>
<keyword id="KW-0808">Transferase</keyword>
<keyword id="KW-0829">Tyrosine-protein kinase</keyword>
<keyword id="KW-0832">Ubl conjugation</keyword>
<keyword id="KW-0856">Williams-Beuren syndrome</keyword>
<keyword id="KW-0862">Zinc</keyword>
<keyword id="KW-0863">Zinc-finger</keyword>
<accession>Q9UIG0</accession>
<accession>B9EGK3</accession>
<accession>D3DXE9</accession>
<accession>O95039</accession>
<accession>O95247</accession>
<accession>O95277</accession>
<accession>Q6P1K4</accession>
<accession>Q86UJ6</accession>
<comment type="function">
    <text evidence="1 8 9 10 12 13 15">Atypical tyrosine-protein kinase that plays a central role in chromatin remodeling and acts as a transcription regulator (PubMed:19092802). Involved in DNA damage response by phosphorylating 'Tyr-142' of histone H2AX (H2AXY142ph) (PubMed:19092802, PubMed:19234442). H2AXY142ph plays a central role in DNA repair and acts as a mark that distinguishes between apoptotic and repair responses to genotoxic stress (PubMed:19092802, PubMed:19234442). Regulatory subunit of the ATP-dependent WICH-1 and WICH-5 ISWI chromatin remodeling complexes, which form ordered nucleosome arrays on chromatin and facilitate access to DNA during DNA-templated processes such as DNA replication, transcription, and repair (PubMed:11980720, PubMed:28801535). Both complexes regulate the spacing of nucleosomes along the chromatin and have the ability to slide mononucleosomes to the center of a DNA template (PubMed:28801535). The WICH-1 ISWI chromatin remodeling complex has a lower ATP hydrolysis rate than the WICH-5 ISWI chromatin remodeling complex (PubMed:28801535). The WICH-5 ISWI chromatin-remodeling complex regulates the transcription of various genes, has a role in RNA polymerase I transcription (By similarity). Within the B-WICH complex has a role in RNA polymerase III transcription (PubMed:16603771). Mediates the recruitment of the WICH-5 ISWI chromatin remodeling complex to replication foci during DNA replication (PubMed:15543136).</text>
</comment>
<comment type="catalytic activity">
    <reaction evidence="12">
        <text>L-tyrosyl-[protein] + ATP = O-phospho-L-tyrosyl-[protein] + ADP + H(+)</text>
        <dbReference type="Rhea" id="RHEA:10596"/>
        <dbReference type="Rhea" id="RHEA-COMP:10136"/>
        <dbReference type="Rhea" id="RHEA-COMP:20101"/>
        <dbReference type="ChEBI" id="CHEBI:15378"/>
        <dbReference type="ChEBI" id="CHEBI:30616"/>
        <dbReference type="ChEBI" id="CHEBI:46858"/>
        <dbReference type="ChEBI" id="CHEBI:61978"/>
        <dbReference type="ChEBI" id="CHEBI:456216"/>
        <dbReference type="EC" id="2.7.10.2"/>
    </reaction>
</comment>
<comment type="cofactor">
    <cofactor evidence="12">
        <name>Mn(2+)</name>
        <dbReference type="ChEBI" id="CHEBI:29035"/>
    </cofactor>
</comment>
<comment type="subunit">
    <text evidence="1 8 9 10 11 15">Component of the WICH-1 ISWI chromatin remodeling complex, at least composed of SMARCA1 and BAZ1B/WSTF, which regulates the spacing of histone octamers on the DNA template to facilitate access to DNA (PubMed:28801535). Within the WICH-1 ISWI chromatin remodeling complex interacts with SMARCA1; the interaction is direct (PubMed:28801535). Component of the WICH-5 ISWI chromatin remodeling complex (also called the WICH complex), at least composed of SMARCA5/SNF2H and BAZ1B/WSTF, which regulates the spacing of histone octamers on the DNA template to facilitate access to DNA (PubMed:11980720, PubMed:28801535). Within the WICH-5 ISWI chromatin remodeling complex interacts with SMARCA5/SNF2H; the interaction is direct (PubMed:11980720, PubMed:15543136, PubMed:28801535). Component of the B-WICH chromatin remodeling complex, at least composed of SMARCA5/SNF2H, BAZ1B/WSTF, SF3B1, DEK, MYO1C, ERCC6, MYBBP1A and DDX21 (PubMed:16603771). Within the B-WICH chromatin remodeling complex, interacts with SMARCA5/SNF2H, DDX21, DEK, MYBBP1A, SF3B1, ERCC6 and MYO1C (PubMed:16603771). Interacts with PCNA; the interaction is direct and is required for BAZ1B/WSTF binding to replication foci during S phase (PubMed:15543136). Interacts with CDT1 (PubMed:18162579).</text>
</comment>
<comment type="interaction">
    <interactant intactId="EBI-927482">
        <id>Q9UIG0</id>
    </interactant>
    <interactant intactId="EBI-358372">
        <id>P16403</id>
        <label>H1-2</label>
    </interactant>
    <organismsDiffer>false</organismsDiffer>
    <experiments>2</experiments>
</comment>
<comment type="interaction">
    <interactant intactId="EBI-927482">
        <id>Q9UIG0</id>
    </interactant>
    <interactant intactId="EBI-358163">
        <id>P10412</id>
        <label>H1-4</label>
    </interactant>
    <organismsDiffer>false</organismsDiffer>
    <experiments>2</experiments>
</comment>
<comment type="interaction">
    <interactant intactId="EBI-927482">
        <id>Q9UIG0</id>
    </interactant>
    <interactant intactId="EBI-2822460">
        <id>P28370</id>
        <label>SMARCA1</label>
    </interactant>
    <organismsDiffer>false</organismsDiffer>
    <experiments>2</experiments>
</comment>
<comment type="interaction">
    <interactant intactId="EBI-927482">
        <id>Q9UIG0</id>
    </interactant>
    <interactant intactId="EBI-352588">
        <id>O60264</id>
        <label>SMARCA5</label>
    </interactant>
    <organismsDiffer>false</organismsDiffer>
    <experiments>8</experiments>
</comment>
<comment type="subcellular location">
    <subcellularLocation>
        <location evidence="4 6 8 9 10 14">Nucleus</location>
    </subcellularLocation>
    <text evidence="9 14">Accumulates in pericentromeric heterochromatin during replication (PubMed:15543136). Co-localizes with PCNA at replication foci during S phase (PubMed:15543136). Co-localizes with SMARCA5/SNF2H at replication foci during late-S phase (PubMed:15543136). Also localizes to replication foci independently of SMARCA5/SNF2H and PCNA (PubMed:15543136). Localizes to sites of DNA damage (PubMed:25593309).</text>
</comment>
<comment type="alternative products">
    <event type="alternative splicing"/>
    <isoform>
        <id>Q9UIG0-1</id>
        <name>1</name>
        <sequence type="displayed"/>
    </isoform>
    <isoform>
        <id>Q9UIG0-2</id>
        <name>2</name>
        <sequence type="described" ref="VSP_000552"/>
    </isoform>
</comment>
<comment type="tissue specificity">
    <text>Ubiquitously expressed with high levels of expression in heart, brain, placenta, skeletal muscle and ovary.</text>
</comment>
<comment type="developmental stage">
    <text>Expressed at equal levels in 19-23 weeks old fetal tissues.</text>
</comment>
<comment type="disease">
    <text>BAZ1B is located in the Williams-Beuren syndrome (WBS) critical region. WBS results from a hemizygous deletion of several genes on chromosome 7q11.23, thought to arise as a consequence of unequal crossing over between highly homologous low-copy repeat sequences flanking the deleted region. Haploinsufficiency of BAZ1B may be the cause of certain cardiovascular and musculo-skeletal abnormalities observed in the disease.</text>
</comment>
<comment type="similarity">
    <text evidence="17">Belongs to the WAL family. BAZ1B subfamily.</text>
</comment>
<comment type="caution">
    <text evidence="18 19">Was shown to interact with VDR and with acetylated histones via its Bromo domain, but this work has later been retracted.</text>
</comment>
<comment type="sequence caution" evidence="17">
    <conflict type="frameshift">
        <sequence resource="EMBL-CDS" id="AAC97879"/>
    </conflict>
</comment>
<comment type="sequence caution" evidence="17">
    <conflict type="erroneous gene model prediction">
        <sequence resource="EMBL-CDS" id="AAD04720"/>
    </conflict>
</comment>
<comment type="sequence caution" evidence="17">
    <conflict type="miscellaneous discrepancy">
        <sequence resource="EMBL-CDS" id="AAH65029"/>
    </conflict>
    <text>Contaminating sequence. Potential poly-A sequence.</text>
</comment>
<comment type="sequence caution" evidence="17">
    <conflict type="frameshift">
        <sequence resource="EMBL-CDS" id="BAA89210"/>
    </conflict>
</comment>
<sequence length="1483" mass="170903">MAPLLGRKPFPLVKPLPGEEPLFTIPHTQEAFRTREEYEARLERYSERIWTCKSTGSSQLTHKEAWEEEQEVAELLKEEFPAWYEKLVLEMVHHNTASLEKLVDTAWLEIMTKYAVGEECDFEVGKEKMLKVKIVKIHPLEKVDEEATEKKSDGACDSPSSDKENSSQIAQDHQKKETVVKEDEGRRESINDRARRSPRKLPTSLKKGERKWAPPKFLPHKYDVKLQNEDKIISNVPADSLIRTERPPNKEIVRYFIRHNALRAGTGENAPWVVEDELVKKYSLPSKFSDFLLDPYKYMTLNPSTKRKNTGSPDRKPSKKSKTDNSSLSSPLNPKLWCHVHLKKSLSGSPLKVKNSKNSKSPEEHLEEMMKMMSPNKLHTNFHIPKKGPPAKKPGKHSDKPLKAKGRSKGILNGQKSTGNSKSPKKGLKTPKTKMKQMTLLDMAKGTQKMTRAPRNSGGTPRTSSKPHKHLPPAALHLIAYYKENKDREDKRSALSCVISKTARLLSSEDRARLPEELRSLVQKRYELLEHKKRWASMSEEQRKEYLKKKREELKKKLKEKAKERREKEMLERLEKQKRYEDQELTGKNLPAFRLVDTPEGLPNTLFGDVAMVVEFLSCYSGLLLPDAQYPITAVSLMEALSADKGGFLYLNRVLVILLQTLLQDEIAEDYGELGMKLSEIPLTLHSVSELVRLCLRRSDVQEESEGSDTDDNKDSAAFEDNEVQDEFLEKLETSEFFELTSEEKLQILTALCHRILMTYSVQDHMETRQQMSAELWKERLAVLKEENDKKRAEKQKRKEMEAKNKENGKVENGLGKTDRKKEIVKFEPQVDTEAEDMISAVKSRRLLAIQAKKEREIQEREMKVKLERQAEEERIRKHKAAAEKAFQEGIAKAKLVMRRTPIGTDRNHNRYWLFSDEVPGLFIEKGWVHDSIDYRFNHHCKDHTVSGDEDYCPRSKKANLGKNASMNTQHGTATEVAVETTTPKQGQNLWFLCDSQKELDELLNCLHPQGIRESQLKERLEKRYQDIIHSIHLARKPNLGLKSCDGNQELLNFLRSDLIEVATRLQKGGLGYVEETSEFEARVISLEKLKDFGECVIALQASVIKKFLQGFMAPKQKRRKLQSEDSAKTEEVDEEKKMVEEAKVASALEKWKTAIREAQTFSRMHVLLGMLDACIKWDMSAENARCKVCRKKGEDDKLILCDECNKAFHLFCLRPALYEVPDGEWQCPACQPATARRNSRGRNYTEESASEDSEDDESDEEEEEEEEEEEEEDYEVAGLRLRPRKTIRGKHSVIPPAARSGRRPGKKPHSTRRSQPKAPPVDDAEVDELVLQTKRSSRRQSLELQKCEEILHKIVKYRFSWPFREPVTRDEAEDYYDVITHPMDFQTVQNKCSCGSYRSVQEFLTDMKQVFTNAEVYNCRGSHVLSCMVKTEQCLVALLHKHLPGHPYVRRKRKKFPDRLAEDEGDSEPEAVGQSRGRRQKK</sequence>
<protein>
    <recommendedName>
        <fullName>Tyrosine-protein kinase BAZ1B</fullName>
        <ecNumber evidence="12">2.7.10.2</ecNumber>
    </recommendedName>
    <alternativeName>
        <fullName>Bromodomain adjacent to zinc finger domain protein 1B</fullName>
    </alternativeName>
    <alternativeName>
        <fullName>Williams syndrome transcription factor</fullName>
    </alternativeName>
    <alternativeName>
        <fullName>Williams-Beuren syndrome chromosomal region 10 protein</fullName>
    </alternativeName>
    <alternativeName>
        <fullName>Williams-Beuren syndrome chromosomal region 9 protein</fullName>
    </alternativeName>
    <alternativeName>
        <fullName>hWALp2</fullName>
    </alternativeName>
</protein>
<dbReference type="EC" id="2.7.10.2" evidence="12"/>
<dbReference type="EMBL" id="AF084479">
    <property type="protein sequence ID" value="AAD08675.1"/>
    <property type="molecule type" value="mRNA"/>
</dbReference>
<dbReference type="EMBL" id="AF072810">
    <property type="protein sequence ID" value="AAC97879.1"/>
    <property type="status" value="ALT_FRAME"/>
    <property type="molecule type" value="mRNA"/>
</dbReference>
<dbReference type="EMBL" id="AB032253">
    <property type="protein sequence ID" value="BAA89210.1"/>
    <property type="status" value="ALT_FRAME"/>
    <property type="molecule type" value="mRNA"/>
</dbReference>
<dbReference type="EMBL" id="AC005074">
    <property type="protein sequence ID" value="AAD04720.1"/>
    <property type="status" value="ALT_SEQ"/>
    <property type="molecule type" value="Genomic_DNA"/>
</dbReference>
<dbReference type="EMBL" id="AC005089">
    <property type="protein sequence ID" value="AAP22332.1"/>
    <property type="molecule type" value="Genomic_DNA"/>
</dbReference>
<dbReference type="EMBL" id="CH471200">
    <property type="protein sequence ID" value="EAW69680.1"/>
    <property type="molecule type" value="Genomic_DNA"/>
</dbReference>
<dbReference type="EMBL" id="CH471200">
    <property type="protein sequence ID" value="EAW69681.1"/>
    <property type="molecule type" value="Genomic_DNA"/>
</dbReference>
<dbReference type="EMBL" id="BC065029">
    <property type="protein sequence ID" value="AAH65029.1"/>
    <property type="status" value="ALT_SEQ"/>
    <property type="molecule type" value="mRNA"/>
</dbReference>
<dbReference type="EMBL" id="BC136520">
    <property type="protein sequence ID" value="AAI36521.1"/>
    <property type="molecule type" value="mRNA"/>
</dbReference>
<dbReference type="CCDS" id="CCDS5549.1">
    <molecule id="Q9UIG0-1"/>
</dbReference>
<dbReference type="RefSeq" id="NP_001357331.1">
    <molecule id="Q9UIG0-1"/>
    <property type="nucleotide sequence ID" value="NM_001370402.1"/>
</dbReference>
<dbReference type="RefSeq" id="NP_115784.1">
    <molecule id="Q9UIG0-1"/>
    <property type="nucleotide sequence ID" value="NM_032408.4"/>
</dbReference>
<dbReference type="RefSeq" id="XP_016868262.1">
    <property type="nucleotide sequence ID" value="XM_017012773.1"/>
</dbReference>
<dbReference type="PDB" id="1F62">
    <property type="method" value="NMR"/>
    <property type="chains" value="A=1185-1235"/>
</dbReference>
<dbReference type="PDB" id="5NNF">
    <property type="method" value="X-ray"/>
    <property type="resolution" value="1.15 A"/>
    <property type="chains" value="B=217-226"/>
</dbReference>
<dbReference type="PDBsum" id="1F62"/>
<dbReference type="PDBsum" id="5NNF"/>
<dbReference type="SMR" id="Q9UIG0"/>
<dbReference type="BioGRID" id="114497">
    <property type="interactions" value="214"/>
</dbReference>
<dbReference type="ComplexPortal" id="CPX-1099">
    <property type="entry name" value="B-WICH chromatin remodelling complex"/>
</dbReference>
<dbReference type="ComplexPortal" id="CPX-757">
    <property type="entry name" value="WICH chromatin remodelling complex"/>
</dbReference>
<dbReference type="CORUM" id="Q9UIG0"/>
<dbReference type="DIP" id="DIP-35642N"/>
<dbReference type="ELM" id="Q9UIG0"/>
<dbReference type="FunCoup" id="Q9UIG0">
    <property type="interactions" value="3439"/>
</dbReference>
<dbReference type="IntAct" id="Q9UIG0">
    <property type="interactions" value="100"/>
</dbReference>
<dbReference type="MINT" id="Q9UIG0"/>
<dbReference type="STRING" id="9606.ENSP00000342434"/>
<dbReference type="BindingDB" id="Q9UIG0"/>
<dbReference type="ChEMBL" id="CHEMBL3588730"/>
<dbReference type="CarbonylDB" id="Q9UIG0"/>
<dbReference type="GlyGen" id="Q9UIG0">
    <property type="glycosylation" value="2 sites, 1 N-linked glycan (1 site), 1 O-linked glycan (1 site)"/>
</dbReference>
<dbReference type="iPTMnet" id="Q9UIG0"/>
<dbReference type="PhosphoSitePlus" id="Q9UIG0"/>
<dbReference type="SwissPalm" id="Q9UIG0"/>
<dbReference type="BioMuta" id="BAZ1B"/>
<dbReference type="DMDM" id="22653670"/>
<dbReference type="jPOST" id="Q9UIG0"/>
<dbReference type="MassIVE" id="Q9UIG0"/>
<dbReference type="PaxDb" id="9606-ENSP00000342434"/>
<dbReference type="PeptideAtlas" id="Q9UIG0"/>
<dbReference type="ProteomicsDB" id="84514">
    <molecule id="Q9UIG0-1"/>
</dbReference>
<dbReference type="ProteomicsDB" id="84515">
    <molecule id="Q9UIG0-2"/>
</dbReference>
<dbReference type="Pumba" id="Q9UIG0"/>
<dbReference type="ABCD" id="Q9UIG0">
    <property type="antibodies" value="1 sequenced antibody"/>
</dbReference>
<dbReference type="Antibodypedia" id="14309">
    <property type="antibodies" value="289 antibodies from 32 providers"/>
</dbReference>
<dbReference type="DNASU" id="9031"/>
<dbReference type="Ensembl" id="ENST00000339594.9">
    <molecule id="Q9UIG0-1"/>
    <property type="protein sequence ID" value="ENSP00000342434.4"/>
    <property type="gene ID" value="ENSG00000009954.11"/>
</dbReference>
<dbReference type="Ensembl" id="ENST00000404251.1">
    <molecule id="Q9UIG0-1"/>
    <property type="protein sequence ID" value="ENSP00000385442.1"/>
    <property type="gene ID" value="ENSG00000009954.11"/>
</dbReference>
<dbReference type="GeneID" id="9031"/>
<dbReference type="KEGG" id="hsa:9031"/>
<dbReference type="MANE-Select" id="ENST00000339594.9">
    <property type="protein sequence ID" value="ENSP00000342434.4"/>
    <property type="RefSeq nucleotide sequence ID" value="NM_032408.4"/>
    <property type="RefSeq protein sequence ID" value="NP_115784.1"/>
</dbReference>
<dbReference type="UCSC" id="uc003tyc.4">
    <molecule id="Q9UIG0-1"/>
    <property type="organism name" value="human"/>
</dbReference>
<dbReference type="AGR" id="HGNC:961"/>
<dbReference type="CTD" id="9031"/>
<dbReference type="DisGeNET" id="9031"/>
<dbReference type="GeneCards" id="BAZ1B"/>
<dbReference type="HGNC" id="HGNC:961">
    <property type="gene designation" value="BAZ1B"/>
</dbReference>
<dbReference type="HPA" id="ENSG00000009954">
    <property type="expression patterns" value="Low tissue specificity"/>
</dbReference>
<dbReference type="MalaCards" id="BAZ1B"/>
<dbReference type="MIM" id="605681">
    <property type="type" value="gene"/>
</dbReference>
<dbReference type="neXtProt" id="NX_Q9UIG0"/>
<dbReference type="OpenTargets" id="ENSG00000009954"/>
<dbReference type="Orphanet" id="904">
    <property type="disease" value="Williams syndrome"/>
</dbReference>
<dbReference type="PharmGKB" id="PA25271"/>
<dbReference type="VEuPathDB" id="HostDB:ENSG00000009954"/>
<dbReference type="eggNOG" id="KOG1245">
    <property type="taxonomic scope" value="Eukaryota"/>
</dbReference>
<dbReference type="GeneTree" id="ENSGT00940000156831"/>
<dbReference type="HOGENOM" id="CLU_004410_0_0_1"/>
<dbReference type="InParanoid" id="Q9UIG0"/>
<dbReference type="OMA" id="KVCRRKV"/>
<dbReference type="OrthoDB" id="787137at2759"/>
<dbReference type="PAN-GO" id="Q9UIG0">
    <property type="GO annotations" value="7 GO annotations based on evolutionary models"/>
</dbReference>
<dbReference type="PhylomeDB" id="Q9UIG0"/>
<dbReference type="TreeFam" id="TF106397"/>
<dbReference type="PathwayCommons" id="Q9UIG0"/>
<dbReference type="Reactome" id="R-HSA-5250924">
    <property type="pathway name" value="B-WICH complex positively regulates rRNA expression"/>
</dbReference>
<dbReference type="Reactome" id="R-HSA-5693565">
    <property type="pathway name" value="Recruitment and ATM-mediated phosphorylation of repair and signaling proteins at DNA double strand breaks"/>
</dbReference>
<dbReference type="SignaLink" id="Q9UIG0"/>
<dbReference type="SIGNOR" id="Q9UIG0"/>
<dbReference type="BioGRID-ORCS" id="9031">
    <property type="hits" value="153 hits in 1183 CRISPR screens"/>
</dbReference>
<dbReference type="CD-CODE" id="232F8A39">
    <property type="entry name" value="P-body"/>
</dbReference>
<dbReference type="CD-CODE" id="91857CE7">
    <property type="entry name" value="Nucleolus"/>
</dbReference>
<dbReference type="ChiTaRS" id="BAZ1B">
    <property type="organism name" value="human"/>
</dbReference>
<dbReference type="EvolutionaryTrace" id="Q9UIG0"/>
<dbReference type="GeneWiki" id="BAZ1B"/>
<dbReference type="GenomeRNAi" id="9031"/>
<dbReference type="Pharos" id="Q9UIG0">
    <property type="development level" value="Tbio"/>
</dbReference>
<dbReference type="PRO" id="PR:Q9UIG0"/>
<dbReference type="Proteomes" id="UP000005640">
    <property type="component" value="Chromosome 7"/>
</dbReference>
<dbReference type="RNAct" id="Q9UIG0">
    <property type="molecule type" value="protein"/>
</dbReference>
<dbReference type="Bgee" id="ENSG00000009954">
    <property type="expression patterns" value="Expressed in oocyte and 210 other cell types or tissues"/>
</dbReference>
<dbReference type="GO" id="GO:0110016">
    <property type="term" value="C:B-WICH complex"/>
    <property type="evidence" value="ECO:0000314"/>
    <property type="project" value="ComplexPortal"/>
</dbReference>
<dbReference type="GO" id="GO:0000793">
    <property type="term" value="C:condensed chromosome"/>
    <property type="evidence" value="ECO:0007669"/>
    <property type="project" value="Ensembl"/>
</dbReference>
<dbReference type="GO" id="GO:0005730">
    <property type="term" value="C:nucleolus"/>
    <property type="evidence" value="ECO:0000303"/>
    <property type="project" value="ComplexPortal"/>
</dbReference>
<dbReference type="GO" id="GO:0005654">
    <property type="term" value="C:nucleoplasm"/>
    <property type="evidence" value="ECO:0000314"/>
    <property type="project" value="HPA"/>
</dbReference>
<dbReference type="GO" id="GO:0005634">
    <property type="term" value="C:nucleus"/>
    <property type="evidence" value="ECO:0000314"/>
    <property type="project" value="UniProtKB"/>
</dbReference>
<dbReference type="GO" id="GO:0005721">
    <property type="term" value="C:pericentric heterochromatin"/>
    <property type="evidence" value="ECO:0000266"/>
    <property type="project" value="ComplexPortal"/>
</dbReference>
<dbReference type="GO" id="GO:0090535">
    <property type="term" value="C:WICH complex"/>
    <property type="evidence" value="ECO:0000314"/>
    <property type="project" value="ComplexPortal"/>
</dbReference>
<dbReference type="GO" id="GO:0005524">
    <property type="term" value="F:ATP binding"/>
    <property type="evidence" value="ECO:0007669"/>
    <property type="project" value="UniProtKB-KW"/>
</dbReference>
<dbReference type="GO" id="GO:0042393">
    <property type="term" value="F:histone binding"/>
    <property type="evidence" value="ECO:0000318"/>
    <property type="project" value="GO_Central"/>
</dbReference>
<dbReference type="GO" id="GO:0140801">
    <property type="term" value="F:histone H2AXY142 kinase activity"/>
    <property type="evidence" value="ECO:0000314"/>
    <property type="project" value="UniProtKB"/>
</dbReference>
<dbReference type="GO" id="GO:0035173">
    <property type="term" value="F:histone kinase activity"/>
    <property type="evidence" value="ECO:0000318"/>
    <property type="project" value="GO_Central"/>
</dbReference>
<dbReference type="GO" id="GO:0004715">
    <property type="term" value="F:non-membrane spanning protein tyrosine kinase activity"/>
    <property type="evidence" value="ECO:0007669"/>
    <property type="project" value="UniProtKB-EC"/>
</dbReference>
<dbReference type="GO" id="GO:0008270">
    <property type="term" value="F:zinc ion binding"/>
    <property type="evidence" value="ECO:0000303"/>
    <property type="project" value="UniProtKB"/>
</dbReference>
<dbReference type="GO" id="GO:0006338">
    <property type="term" value="P:chromatin remodeling"/>
    <property type="evidence" value="ECO:0000315"/>
    <property type="project" value="BHF-UCL"/>
</dbReference>
<dbReference type="GO" id="GO:0006974">
    <property type="term" value="P:DNA damage response"/>
    <property type="evidence" value="ECO:0000314"/>
    <property type="project" value="UniProtKB"/>
</dbReference>
<dbReference type="GO" id="GO:1905213">
    <property type="term" value="P:negative regulation of mitotic chromosome condensation"/>
    <property type="evidence" value="ECO:0000314"/>
    <property type="project" value="ComplexPortal"/>
</dbReference>
<dbReference type="GO" id="GO:0045943">
    <property type="term" value="P:positive regulation of transcription by RNA polymerase I"/>
    <property type="evidence" value="ECO:0000303"/>
    <property type="project" value="ComplexPortal"/>
</dbReference>
<dbReference type="GO" id="GO:0045944">
    <property type="term" value="P:positive regulation of transcription by RNA polymerase II"/>
    <property type="evidence" value="ECO:0000303"/>
    <property type="project" value="ComplexPortal"/>
</dbReference>
<dbReference type="GO" id="GO:0045945">
    <property type="term" value="P:positive regulation of transcription by RNA polymerase III"/>
    <property type="evidence" value="ECO:0000314"/>
    <property type="project" value="ComplexPortal"/>
</dbReference>
<dbReference type="GO" id="GO:0043687">
    <property type="term" value="P:post-translational protein modification"/>
    <property type="evidence" value="ECO:0000314"/>
    <property type="project" value="UniProtKB"/>
</dbReference>
<dbReference type="GO" id="GO:0006357">
    <property type="term" value="P:regulation of transcription by RNA polymerase II"/>
    <property type="evidence" value="ECO:0000303"/>
    <property type="project" value="BHF-UCL"/>
</dbReference>
<dbReference type="CDD" id="cd05505">
    <property type="entry name" value="Bromo_WSTF_like"/>
    <property type="match status" value="1"/>
</dbReference>
<dbReference type="CDD" id="cd15628">
    <property type="entry name" value="PHD_BAZ1B"/>
    <property type="match status" value="1"/>
</dbReference>
<dbReference type="FunFam" id="1.20.920.10:FF:000031">
    <property type="entry name" value="Bromodomain adjacent to zinc finger domain, 1B"/>
    <property type="match status" value="1"/>
</dbReference>
<dbReference type="FunFam" id="3.30.40.10:FF:000131">
    <property type="entry name" value="tyrosine-protein kinase BAZ1B isoform X1"/>
    <property type="match status" value="1"/>
</dbReference>
<dbReference type="Gene3D" id="1.20.920.10">
    <property type="entry name" value="Bromodomain-like"/>
    <property type="match status" value="1"/>
</dbReference>
<dbReference type="Gene3D" id="3.30.40.10">
    <property type="entry name" value="Zinc/RING finger domain, C3HC4 (zinc finger)"/>
    <property type="match status" value="1"/>
</dbReference>
<dbReference type="InterPro" id="IPR047174">
    <property type="entry name" value="BAZ1B"/>
</dbReference>
<dbReference type="InterPro" id="IPR037375">
    <property type="entry name" value="BAZ1B_Bromo"/>
</dbReference>
<dbReference type="InterPro" id="IPR047256">
    <property type="entry name" value="BAZ1B_PHD"/>
</dbReference>
<dbReference type="InterPro" id="IPR001487">
    <property type="entry name" value="Bromodomain"/>
</dbReference>
<dbReference type="InterPro" id="IPR036427">
    <property type="entry name" value="Bromodomain-like_sf"/>
</dbReference>
<dbReference type="InterPro" id="IPR018359">
    <property type="entry name" value="Bromodomain_CS"/>
</dbReference>
<dbReference type="InterPro" id="IPR018501">
    <property type="entry name" value="DDT_dom"/>
</dbReference>
<dbReference type="InterPro" id="IPR028942">
    <property type="entry name" value="WHIM1_dom"/>
</dbReference>
<dbReference type="InterPro" id="IPR028941">
    <property type="entry name" value="WHIM2_dom"/>
</dbReference>
<dbReference type="InterPro" id="IPR013136">
    <property type="entry name" value="WSTF_Acf1_Cbp146"/>
</dbReference>
<dbReference type="InterPro" id="IPR019786">
    <property type="entry name" value="Zinc_finger_PHD-type_CS"/>
</dbReference>
<dbReference type="InterPro" id="IPR011011">
    <property type="entry name" value="Znf_FYVE_PHD"/>
</dbReference>
<dbReference type="InterPro" id="IPR001965">
    <property type="entry name" value="Znf_PHD"/>
</dbReference>
<dbReference type="InterPro" id="IPR019787">
    <property type="entry name" value="Znf_PHD-finger"/>
</dbReference>
<dbReference type="InterPro" id="IPR001841">
    <property type="entry name" value="Znf_RING"/>
</dbReference>
<dbReference type="InterPro" id="IPR013083">
    <property type="entry name" value="Znf_RING/FYVE/PHD"/>
</dbReference>
<dbReference type="PANTHER" id="PTHR46802">
    <property type="entry name" value="TYROSINE-PROTEIN KINASE BAZ1B"/>
    <property type="match status" value="1"/>
</dbReference>
<dbReference type="PANTHER" id="PTHR46802:SF1">
    <property type="entry name" value="TYROSINE-PROTEIN KINASE BAZ1B"/>
    <property type="match status" value="1"/>
</dbReference>
<dbReference type="Pfam" id="PF00439">
    <property type="entry name" value="Bromodomain"/>
    <property type="match status" value="1"/>
</dbReference>
<dbReference type="Pfam" id="PF00628">
    <property type="entry name" value="PHD"/>
    <property type="match status" value="1"/>
</dbReference>
<dbReference type="Pfam" id="PF10537">
    <property type="entry name" value="WAC_Acf1_DNA_bd"/>
    <property type="match status" value="1"/>
</dbReference>
<dbReference type="Pfam" id="PF15612">
    <property type="entry name" value="WHIM1"/>
    <property type="match status" value="1"/>
</dbReference>
<dbReference type="Pfam" id="PF15613">
    <property type="entry name" value="WSD"/>
    <property type="match status" value="1"/>
</dbReference>
<dbReference type="PRINTS" id="PR00503">
    <property type="entry name" value="BROMODOMAIN"/>
</dbReference>
<dbReference type="SMART" id="SM00297">
    <property type="entry name" value="BROMO"/>
    <property type="match status" value="1"/>
</dbReference>
<dbReference type="SMART" id="SM00571">
    <property type="entry name" value="DDT"/>
    <property type="match status" value="1"/>
</dbReference>
<dbReference type="SMART" id="SM00249">
    <property type="entry name" value="PHD"/>
    <property type="match status" value="1"/>
</dbReference>
<dbReference type="SUPFAM" id="SSF47370">
    <property type="entry name" value="Bromodomain"/>
    <property type="match status" value="1"/>
</dbReference>
<dbReference type="SUPFAM" id="SSF57903">
    <property type="entry name" value="FYVE/PHD zinc finger"/>
    <property type="match status" value="1"/>
</dbReference>
<dbReference type="PROSITE" id="PS00633">
    <property type="entry name" value="BROMODOMAIN_1"/>
    <property type="match status" value="1"/>
</dbReference>
<dbReference type="PROSITE" id="PS50014">
    <property type="entry name" value="BROMODOMAIN_2"/>
    <property type="match status" value="1"/>
</dbReference>
<dbReference type="PROSITE" id="PS50827">
    <property type="entry name" value="DDT"/>
    <property type="match status" value="1"/>
</dbReference>
<dbReference type="PROSITE" id="PS51136">
    <property type="entry name" value="WAC"/>
    <property type="match status" value="1"/>
</dbReference>
<dbReference type="PROSITE" id="PS01359">
    <property type="entry name" value="ZF_PHD_1"/>
    <property type="match status" value="1"/>
</dbReference>
<dbReference type="PROSITE" id="PS50016">
    <property type="entry name" value="ZF_PHD_2"/>
    <property type="match status" value="1"/>
</dbReference>
<proteinExistence type="evidence at protein level"/>